<protein>
    <recommendedName>
        <fullName evidence="1">ATP synthase subunit c</fullName>
    </recommendedName>
    <alternativeName>
        <fullName evidence="1">ATP synthase F(0) sector subunit c</fullName>
    </alternativeName>
    <alternativeName>
        <fullName evidence="1">F-type ATPase subunit c</fullName>
        <shortName evidence="1">F-ATPase subunit c</shortName>
    </alternativeName>
    <alternativeName>
        <fullName evidence="1">Lipid-binding protein</fullName>
    </alternativeName>
</protein>
<evidence type="ECO:0000255" key="1">
    <source>
        <dbReference type="HAMAP-Rule" id="MF_01396"/>
    </source>
</evidence>
<feature type="chain" id="PRO_5000394529" description="ATP synthase subunit c">
    <location>
        <begin position="1"/>
        <end position="91"/>
    </location>
</feature>
<feature type="transmembrane region" description="Helical" evidence="1">
    <location>
        <begin position="4"/>
        <end position="24"/>
    </location>
</feature>
<feature type="transmembrane region" description="Helical" evidence="1">
    <location>
        <begin position="53"/>
        <end position="73"/>
    </location>
</feature>
<feature type="site" description="Reversibly protonated during proton transport" evidence="1">
    <location>
        <position position="59"/>
    </location>
</feature>
<organism>
    <name type="scientific">Citrifermentans bemidjiense (strain ATCC BAA-1014 / DSM 16622 / JCM 12645 / Bem)</name>
    <name type="common">Geobacter bemidjiensis</name>
    <dbReference type="NCBI Taxonomy" id="404380"/>
    <lineage>
        <taxon>Bacteria</taxon>
        <taxon>Pseudomonadati</taxon>
        <taxon>Thermodesulfobacteriota</taxon>
        <taxon>Desulfuromonadia</taxon>
        <taxon>Geobacterales</taxon>
        <taxon>Geobacteraceae</taxon>
        <taxon>Citrifermentans</taxon>
    </lineage>
</organism>
<accession>B5EFG9</accession>
<gene>
    <name evidence="1" type="primary">atpE</name>
    <name type="ordered locus">Gbem_3932</name>
</gene>
<sequence length="91" mass="9323">MEFFTMCVLAAGIGMALGTLGTGIGQGLAVKSAVEGTSRNPGASGKILTTMMIGLAMIESLAIYALVVCLIILFANPYKDIALELAKSVAK</sequence>
<name>ATPL_CITBB</name>
<dbReference type="EMBL" id="CP001124">
    <property type="protein sequence ID" value="ACH40924.1"/>
    <property type="molecule type" value="Genomic_DNA"/>
</dbReference>
<dbReference type="RefSeq" id="WP_012532358.1">
    <property type="nucleotide sequence ID" value="NC_011146.1"/>
</dbReference>
<dbReference type="SMR" id="B5EFG9"/>
<dbReference type="STRING" id="404380.Gbem_3932"/>
<dbReference type="KEGG" id="gbm:Gbem_3932"/>
<dbReference type="eggNOG" id="COG0636">
    <property type="taxonomic scope" value="Bacteria"/>
</dbReference>
<dbReference type="HOGENOM" id="CLU_148047_2_0_7"/>
<dbReference type="OrthoDB" id="5296711at2"/>
<dbReference type="Proteomes" id="UP000008825">
    <property type="component" value="Chromosome"/>
</dbReference>
<dbReference type="GO" id="GO:0005886">
    <property type="term" value="C:plasma membrane"/>
    <property type="evidence" value="ECO:0007669"/>
    <property type="project" value="UniProtKB-SubCell"/>
</dbReference>
<dbReference type="GO" id="GO:0045259">
    <property type="term" value="C:proton-transporting ATP synthase complex"/>
    <property type="evidence" value="ECO:0007669"/>
    <property type="project" value="UniProtKB-KW"/>
</dbReference>
<dbReference type="GO" id="GO:0033177">
    <property type="term" value="C:proton-transporting two-sector ATPase complex, proton-transporting domain"/>
    <property type="evidence" value="ECO:0007669"/>
    <property type="project" value="InterPro"/>
</dbReference>
<dbReference type="GO" id="GO:0008289">
    <property type="term" value="F:lipid binding"/>
    <property type="evidence" value="ECO:0007669"/>
    <property type="project" value="UniProtKB-KW"/>
</dbReference>
<dbReference type="GO" id="GO:0046933">
    <property type="term" value="F:proton-transporting ATP synthase activity, rotational mechanism"/>
    <property type="evidence" value="ECO:0007669"/>
    <property type="project" value="UniProtKB-UniRule"/>
</dbReference>
<dbReference type="CDD" id="cd18121">
    <property type="entry name" value="ATP-synt_Fo_c"/>
    <property type="match status" value="1"/>
</dbReference>
<dbReference type="Gene3D" id="1.20.120.610">
    <property type="entry name" value="lithium bound rotor ring of v- atpase"/>
    <property type="match status" value="1"/>
</dbReference>
<dbReference type="HAMAP" id="MF_01396">
    <property type="entry name" value="ATP_synth_c_bact"/>
    <property type="match status" value="1"/>
</dbReference>
<dbReference type="InterPro" id="IPR005953">
    <property type="entry name" value="ATP_synth_csu_bac/chlpt"/>
</dbReference>
<dbReference type="InterPro" id="IPR000454">
    <property type="entry name" value="ATP_synth_F0_csu"/>
</dbReference>
<dbReference type="InterPro" id="IPR020537">
    <property type="entry name" value="ATP_synth_F0_csu_DDCD_BS"/>
</dbReference>
<dbReference type="InterPro" id="IPR002379">
    <property type="entry name" value="ATPase_proteolipid_c-like_dom"/>
</dbReference>
<dbReference type="InterPro" id="IPR035921">
    <property type="entry name" value="F/V-ATP_Csub_sf"/>
</dbReference>
<dbReference type="NCBIfam" id="TIGR01260">
    <property type="entry name" value="ATP_synt_c"/>
    <property type="match status" value="1"/>
</dbReference>
<dbReference type="PANTHER" id="PTHR10031">
    <property type="entry name" value="ATP SYNTHASE LIPID-BINDING PROTEIN, MITOCHONDRIAL"/>
    <property type="match status" value="1"/>
</dbReference>
<dbReference type="PANTHER" id="PTHR10031:SF0">
    <property type="entry name" value="ATPASE PROTEIN 9"/>
    <property type="match status" value="1"/>
</dbReference>
<dbReference type="Pfam" id="PF00137">
    <property type="entry name" value="ATP-synt_C"/>
    <property type="match status" value="1"/>
</dbReference>
<dbReference type="PRINTS" id="PR00124">
    <property type="entry name" value="ATPASEC"/>
</dbReference>
<dbReference type="SUPFAM" id="SSF81333">
    <property type="entry name" value="F1F0 ATP synthase subunit C"/>
    <property type="match status" value="1"/>
</dbReference>
<dbReference type="PROSITE" id="PS00605">
    <property type="entry name" value="ATPASE_C"/>
    <property type="match status" value="1"/>
</dbReference>
<keyword id="KW-0066">ATP synthesis</keyword>
<keyword id="KW-0997">Cell inner membrane</keyword>
<keyword id="KW-1003">Cell membrane</keyword>
<keyword id="KW-0138">CF(0)</keyword>
<keyword id="KW-0375">Hydrogen ion transport</keyword>
<keyword id="KW-0406">Ion transport</keyword>
<keyword id="KW-0446">Lipid-binding</keyword>
<keyword id="KW-0472">Membrane</keyword>
<keyword id="KW-1185">Reference proteome</keyword>
<keyword id="KW-0812">Transmembrane</keyword>
<keyword id="KW-1133">Transmembrane helix</keyword>
<keyword id="KW-0813">Transport</keyword>
<reference key="1">
    <citation type="submission" date="2008-07" db="EMBL/GenBank/DDBJ databases">
        <title>Complete sequence of Geobacter bemidjiensis BEM.</title>
        <authorList>
            <consortium name="US DOE Joint Genome Institute"/>
            <person name="Lucas S."/>
            <person name="Copeland A."/>
            <person name="Lapidus A."/>
            <person name="Glavina del Rio T."/>
            <person name="Dalin E."/>
            <person name="Tice H."/>
            <person name="Bruce D."/>
            <person name="Goodwin L."/>
            <person name="Pitluck S."/>
            <person name="Kiss H."/>
            <person name="Brettin T."/>
            <person name="Detter J.C."/>
            <person name="Han C."/>
            <person name="Kuske C.R."/>
            <person name="Schmutz J."/>
            <person name="Larimer F."/>
            <person name="Land M."/>
            <person name="Hauser L."/>
            <person name="Kyrpides N."/>
            <person name="Lykidis A."/>
            <person name="Lovley D."/>
            <person name="Richardson P."/>
        </authorList>
    </citation>
    <scope>NUCLEOTIDE SEQUENCE [LARGE SCALE GENOMIC DNA]</scope>
    <source>
        <strain>ATCC BAA-1014 / DSM 16622 / JCM 12645 / Bem</strain>
    </source>
</reference>
<proteinExistence type="inferred from homology"/>
<comment type="function">
    <text evidence="1">F(1)F(0) ATP synthase produces ATP from ADP in the presence of a proton or sodium gradient. F-type ATPases consist of two structural domains, F(1) containing the extramembraneous catalytic core and F(0) containing the membrane proton channel, linked together by a central stalk and a peripheral stalk. During catalysis, ATP synthesis in the catalytic domain of F(1) is coupled via a rotary mechanism of the central stalk subunits to proton translocation.</text>
</comment>
<comment type="function">
    <text evidence="1">Key component of the F(0) channel; it plays a direct role in translocation across the membrane. A homomeric c-ring of between 10-14 subunits forms the central stalk rotor element with the F(1) delta and epsilon subunits.</text>
</comment>
<comment type="subunit">
    <text evidence="1">F-type ATPases have 2 components, F(1) - the catalytic core - and F(0) - the membrane proton channel. F(1) has five subunits: alpha(3), beta(3), gamma(1), delta(1), epsilon(1). F(0) has three main subunits: a(1), b(2) and c(10-14). The alpha and beta chains form an alternating ring which encloses part of the gamma chain. F(1) is attached to F(0) by a central stalk formed by the gamma and epsilon chains, while a peripheral stalk is formed by the delta and b chains.</text>
</comment>
<comment type="subcellular location">
    <subcellularLocation>
        <location evidence="1">Cell inner membrane</location>
        <topology evidence="1">Multi-pass membrane protein</topology>
    </subcellularLocation>
</comment>
<comment type="similarity">
    <text evidence="1">Belongs to the ATPase C chain family.</text>
</comment>